<dbReference type="EC" id="2.7.7.7"/>
<dbReference type="EC" id="2.7.7.49"/>
<dbReference type="EC" id="3.1.26.4"/>
<dbReference type="EMBL" id="M22056">
    <property type="protein sequence ID" value="AAA45738.1"/>
    <property type="molecule type" value="Genomic_DNA"/>
</dbReference>
<dbReference type="PIR" id="A30082">
    <property type="entry name" value="JDVLHH"/>
</dbReference>
<dbReference type="RefSeq" id="NP_040998.1">
    <property type="nucleotide sequence ID" value="NC_001486.1"/>
</dbReference>
<dbReference type="KEGG" id="vg:2703545"/>
<dbReference type="OrthoDB" id="1824at10239"/>
<dbReference type="Proteomes" id="UP000008679">
    <property type="component" value="Genome"/>
</dbReference>
<dbReference type="GO" id="GO:0003677">
    <property type="term" value="F:DNA binding"/>
    <property type="evidence" value="ECO:0007669"/>
    <property type="project" value="UniProtKB-KW"/>
</dbReference>
<dbReference type="GO" id="GO:0003887">
    <property type="term" value="F:DNA-directed DNA polymerase activity"/>
    <property type="evidence" value="ECO:0007669"/>
    <property type="project" value="UniProtKB-KW"/>
</dbReference>
<dbReference type="GO" id="GO:0046872">
    <property type="term" value="F:metal ion binding"/>
    <property type="evidence" value="ECO:0007669"/>
    <property type="project" value="UniProtKB-KW"/>
</dbReference>
<dbReference type="GO" id="GO:0003964">
    <property type="term" value="F:RNA-directed DNA polymerase activity"/>
    <property type="evidence" value="ECO:0007669"/>
    <property type="project" value="UniProtKB-KW"/>
</dbReference>
<dbReference type="GO" id="GO:0004523">
    <property type="term" value="F:RNA-DNA hybrid ribonuclease activity"/>
    <property type="evidence" value="ECO:0007669"/>
    <property type="project" value="UniProtKB-EC"/>
</dbReference>
<dbReference type="GO" id="GO:0006260">
    <property type="term" value="P:DNA replication"/>
    <property type="evidence" value="ECO:0007669"/>
    <property type="project" value="UniProtKB-KW"/>
</dbReference>
<dbReference type="FunFam" id="3.30.70.270:FF:000058">
    <property type="entry name" value="Protein P"/>
    <property type="match status" value="1"/>
</dbReference>
<dbReference type="Gene3D" id="3.30.70.270">
    <property type="match status" value="1"/>
</dbReference>
<dbReference type="Gene3D" id="3.10.10.10">
    <property type="entry name" value="HIV Type 1 Reverse Transcriptase, subunit A, domain 1"/>
    <property type="match status" value="1"/>
</dbReference>
<dbReference type="InterPro" id="IPR043502">
    <property type="entry name" value="DNA/RNA_pol_sf"/>
</dbReference>
<dbReference type="InterPro" id="IPR001462">
    <property type="entry name" value="DNApol_viral_C"/>
</dbReference>
<dbReference type="InterPro" id="IPR000201">
    <property type="entry name" value="DNApol_viral_N"/>
</dbReference>
<dbReference type="InterPro" id="IPR052055">
    <property type="entry name" value="Hepadnavirus_pol/RT"/>
</dbReference>
<dbReference type="InterPro" id="IPR043128">
    <property type="entry name" value="Rev_trsase/Diguanyl_cyclase"/>
</dbReference>
<dbReference type="InterPro" id="IPR000477">
    <property type="entry name" value="RT_dom"/>
</dbReference>
<dbReference type="PANTHER" id="PTHR33050">
    <property type="entry name" value="REVERSE TRANSCRIPTASE DOMAIN-CONTAINING PROTEIN"/>
    <property type="match status" value="1"/>
</dbReference>
<dbReference type="PANTHER" id="PTHR33050:SF7">
    <property type="entry name" value="RIBONUCLEASE H"/>
    <property type="match status" value="1"/>
</dbReference>
<dbReference type="Pfam" id="PF00336">
    <property type="entry name" value="DNA_pol_viral_C"/>
    <property type="match status" value="1"/>
</dbReference>
<dbReference type="Pfam" id="PF00242">
    <property type="entry name" value="DNA_pol_viral_N"/>
    <property type="match status" value="1"/>
</dbReference>
<dbReference type="Pfam" id="PF00078">
    <property type="entry name" value="RVT_1"/>
    <property type="match status" value="1"/>
</dbReference>
<dbReference type="SUPFAM" id="SSF56672">
    <property type="entry name" value="DNA/RNA polymerases"/>
    <property type="match status" value="1"/>
</dbReference>
<dbReference type="PROSITE" id="PS50878">
    <property type="entry name" value="RT_POL"/>
    <property type="match status" value="1"/>
</dbReference>
<feature type="chain" id="PRO_0000222332" description="Protein P">
    <location>
        <begin position="1"/>
        <end position="788"/>
    </location>
</feature>
<feature type="domain" description="Reverse transcriptase" evidence="2">
    <location>
        <begin position="376"/>
        <end position="565"/>
    </location>
</feature>
<feature type="region of interest" description="Terminal protein domain (TP)" evidence="1">
    <location>
        <begin position="1"/>
        <end position="200"/>
    </location>
</feature>
<feature type="region of interest" description="Spacer" evidence="1">
    <location>
        <begin position="201"/>
        <end position="370"/>
    </location>
</feature>
<feature type="region of interest" description="Disordered" evidence="3">
    <location>
        <begin position="230"/>
        <end position="381"/>
    </location>
</feature>
<feature type="region of interest" description="RnaseH domain (RH)" evidence="1">
    <location>
        <begin position="656"/>
        <end position="788"/>
    </location>
</feature>
<feature type="compositionally biased region" description="Basic residues" evidence="3">
    <location>
        <begin position="293"/>
        <end position="304"/>
    </location>
</feature>
<feature type="compositionally biased region" description="Polar residues" evidence="3">
    <location>
        <begin position="334"/>
        <end position="350"/>
    </location>
</feature>
<feature type="binding site" evidence="2">
    <location>
        <position position="448"/>
    </location>
    <ligand>
        <name>Mg(2+)</name>
        <dbReference type="ChEBI" id="CHEBI:18420"/>
        <note>catalytic</note>
    </ligand>
</feature>
<feature type="binding site" evidence="2">
    <location>
        <position position="515"/>
    </location>
    <ligand>
        <name>Mg(2+)</name>
        <dbReference type="ChEBI" id="CHEBI:18420"/>
        <note>catalytic</note>
    </ligand>
</feature>
<feature type="binding site" evidence="2">
    <location>
        <position position="516"/>
    </location>
    <ligand>
        <name>Mg(2+)</name>
        <dbReference type="ChEBI" id="CHEBI:18420"/>
        <note>catalytic</note>
    </ligand>
</feature>
<feature type="site" description="Priming of reverse-transcription by covalently linking the first nucleotide of the (-)DNA" evidence="1">
    <location>
        <position position="96"/>
    </location>
</feature>
<reference key="1">
    <citation type="journal article" date="1988" name="J. Virol.">
        <title>Isolation and characterization of a hepatitis B virus endemic in herons.</title>
        <authorList>
            <person name="Sprengel R."/>
            <person name="Kaleta E.F."/>
            <person name="Will H."/>
        </authorList>
    </citation>
    <scope>NUCLEOTIDE SEQUENCE [GENOMIC DNA]</scope>
</reference>
<reference key="2">
    <citation type="journal article" date="2007" name="World J. Gastroenterol.">
        <title>Hepatitis B virus replication.</title>
        <authorList>
            <person name="Beck J."/>
            <person name="Nassal M."/>
        </authorList>
    </citation>
    <scope>REVIEW</scope>
</reference>
<name>DPOL_HHBV</name>
<accession>P13846</accession>
<gene>
    <name type="primary">P</name>
</gene>
<sequence>MPQPLKQSLDQSRWLKEAEIKLRELENLVDSNLEDERLKPQLSMGEDVLSPEAGDPLHPNVRAPLSHVIGETRHDPPHLGNRDPARHKLGKLTGLYQMKGCEFNPHWKIPDISATNFSQEIINECPSRNWKYLTPAKFWPKSISYLPVHSGVKPKYPEFQQNHESLVNDYLNKLFEAGILYKRVSKHLVTFKGPYFTWEQKHLVPQQHGAYSSKINDRQESRRRRIITATSSRKNDSSRIFGAHNNGRKISYHSTRDGSHRLSGRTSDPTSRGALAGGDSTPIGPGSTAAHPSTHHVDRRRRQKGQGVLQAISREPSETRRNGTTSHHRVARCRTSSVEDFTRRPFTQSKGAYPRQGTRGTDPQGPKAHQQEENGSYLRGNTSWPNRVTGRIFLVDKNSRNTEEARLVVDFSQFSKGKNAMRFPKYWCPNLTTLRRILPVGMPRISLDLSQAFYHLPLAPASSSRLAVSDGKQVYYFRKAPMGVGLSPFLLHLFTTAIGAEIASRFNVWTFSYMDDFLLCHPSARHLNTISHAVCTFLQEFGIRINFDKMTPSPVTTIRFLGYEISKQHMKIEESRWNELRTVIKKIKVGQWYDWKCIQRFIGHLNFVLPFTKGNIEMLKPMYDACTHRVNFAFSSRYKILLYKLTMGVCKLTLDPKVSLPLPRVATDATLTHGAISHITGGSAVFTFSKVRDIHIQELLMVCLAKLMIKPRCILTDSTYVCHRKFSKLPWHFAMYAKQLLTRLTLYYVPSKYNPADGPTRHKPPDWTAVTYTPLSKHIYIPHRLCGL</sequence>
<evidence type="ECO:0000250" key="1"/>
<evidence type="ECO:0000255" key="2">
    <source>
        <dbReference type="PROSITE-ProRule" id="PRU00405"/>
    </source>
</evidence>
<evidence type="ECO:0000256" key="3">
    <source>
        <dbReference type="SAM" id="MobiDB-lite"/>
    </source>
</evidence>
<evidence type="ECO:0000305" key="4"/>
<organism>
    <name type="scientific">Heron hepatitis B virus</name>
    <name type="common">HHBV</name>
    <dbReference type="NCBI Taxonomy" id="28300"/>
    <lineage>
        <taxon>Viruses</taxon>
        <taxon>Riboviria</taxon>
        <taxon>Pararnavirae</taxon>
        <taxon>Artverviricota</taxon>
        <taxon>Revtraviricetes</taxon>
        <taxon>Blubervirales</taxon>
        <taxon>Hepadnaviridae</taxon>
        <taxon>Avihepadnavirus</taxon>
    </lineage>
</organism>
<proteinExistence type="inferred from homology"/>
<comment type="function">
    <text evidence="1">Multifunctional enzyme that converts the viral RNA genome into dsDNA in viral cytoplasmic capsids. This enzyme displays a DNA polymerase activity that can copy either DNA or RNA templates, and a ribonuclease H (RNase H) activity that cleaves the RNA strand of RNA-DNA heteroduplexes in a partially processive 3'- to 5'-endonucleasic mode. Neo-synthesized pregenomic RNA (pgRNA) are encapsidated together with the P protein, and reverse-transcribed inside the nucleocapsid. Initiation of reverse-transcription occurs first by binding the epsilon loop on the pgRNA genome, and is initiated by protein priming, thereby the 5'-end of (-)DNA is covalently linked to P protein. Partial (+)DNA is synthesized from the (-)DNA template and generates the relaxed circular DNA (RC-DNA) genome. After budding and infection, the RC-DNA migrates in the nucleus, and is converted into a plasmid-like covalently closed circular DNA (cccDNA). The activity of P protein does not seem to be necessary for cccDNA generation, and is presumably released from (+)DNA by host nuclear DNA repair machinery (By similarity).</text>
</comment>
<comment type="catalytic activity">
    <reaction evidence="2">
        <text>DNA(n) + a 2'-deoxyribonucleoside 5'-triphosphate = DNA(n+1) + diphosphate</text>
        <dbReference type="Rhea" id="RHEA:22508"/>
        <dbReference type="Rhea" id="RHEA-COMP:17339"/>
        <dbReference type="Rhea" id="RHEA-COMP:17340"/>
        <dbReference type="ChEBI" id="CHEBI:33019"/>
        <dbReference type="ChEBI" id="CHEBI:61560"/>
        <dbReference type="ChEBI" id="CHEBI:173112"/>
        <dbReference type="EC" id="2.7.7.7"/>
    </reaction>
</comment>
<comment type="catalytic activity">
    <reaction evidence="2">
        <text>DNA(n) + a 2'-deoxyribonucleoside 5'-triphosphate = DNA(n+1) + diphosphate</text>
        <dbReference type="Rhea" id="RHEA:22508"/>
        <dbReference type="Rhea" id="RHEA-COMP:17339"/>
        <dbReference type="Rhea" id="RHEA-COMP:17340"/>
        <dbReference type="ChEBI" id="CHEBI:33019"/>
        <dbReference type="ChEBI" id="CHEBI:61560"/>
        <dbReference type="ChEBI" id="CHEBI:173112"/>
        <dbReference type="EC" id="2.7.7.49"/>
    </reaction>
</comment>
<comment type="catalytic activity">
    <reaction>
        <text>Endonucleolytic cleavage to 5'-phosphomonoester.</text>
        <dbReference type="EC" id="3.1.26.4"/>
    </reaction>
</comment>
<comment type="activity regulation">
    <text>Activated by host HSP70 and HSP40 in vitro to be able to bind the epsilon loop of the pgRNA. Because deletion of the RNase H region renders the protein partly chaperone-independent, the chaperones may be needed indirectly to relieve occlusion of the RNA-binding site by this domain.</text>
</comment>
<comment type="domain">
    <text evidence="1">Terminal protein domain (TP) is hepadnavirus-specific. Spacer domain is highly variable and separates the TP and RT domains. Polymerase/reverse-transcriptase domain (RT) and ribonuclease H domain (RH) are similar to retrovirus reverse transcriptase/RNase H (By similarity).</text>
</comment>
<comment type="domain">
    <text evidence="1">The polymerase/reverse transcriptase (RT) and ribonuclease H (RH) domains are structured in five subdomains: finger, palm, thumb, connection and RNase H. Within the palm subdomain, the 'primer grip' region is thought to be involved in the positioning of the primer terminus for accommodating the incoming nucleotide. The RH domain stabilizes the association of RT with primer-template (By similarity).</text>
</comment>
<comment type="similarity">
    <text evidence="4">Belongs to the hepadnaviridae P protein family.</text>
</comment>
<keyword id="KW-0235">DNA replication</keyword>
<keyword id="KW-0238">DNA-binding</keyword>
<keyword id="KW-0239">DNA-directed DNA polymerase</keyword>
<keyword id="KW-0255">Endonuclease</keyword>
<keyword id="KW-0378">Hydrolase</keyword>
<keyword id="KW-0460">Magnesium</keyword>
<keyword id="KW-0479">Metal-binding</keyword>
<keyword id="KW-0511">Multifunctional enzyme</keyword>
<keyword id="KW-0540">Nuclease</keyword>
<keyword id="KW-0548">Nucleotidyltransferase</keyword>
<keyword id="KW-0695">RNA-directed DNA polymerase</keyword>
<keyword id="KW-0808">Transferase</keyword>
<organismHost>
    <name type="scientific">Ardeidae</name>
    <name type="common">herons</name>
    <dbReference type="NCBI Taxonomy" id="8899"/>
</organismHost>
<protein>
    <recommendedName>
        <fullName>Protein P</fullName>
    </recommendedName>
    <domain>
        <recommendedName>
            <fullName>DNA-directed DNA polymerase</fullName>
            <ecNumber>2.7.7.7</ecNumber>
        </recommendedName>
    </domain>
    <domain>
        <recommendedName>
            <fullName>RNA-directed DNA polymerase</fullName>
            <ecNumber>2.7.7.49</ecNumber>
        </recommendedName>
    </domain>
    <domain>
        <recommendedName>
            <fullName>Ribonuclease H</fullName>
            <ecNumber>3.1.26.4</ecNumber>
        </recommendedName>
    </domain>
</protein>